<reference key="1">
    <citation type="journal article" date="2005" name="Infect. Genet. Evol.">
        <title>CCR5 chemokine receptor gene evolution in New World monkeys (Platyrrhini, Primates): implication on resistance to lentiviruses.</title>
        <authorList>
            <person name="Ribeiro I.P."/>
            <person name="Schrago C.G."/>
            <person name="Soares E.A.J.M."/>
            <person name="Pissinatti A."/>
            <person name="Seuanez H.N."/>
            <person name="Russo C.A.M."/>
            <person name="Tanuri A."/>
            <person name="Soares M.A."/>
        </authorList>
    </citation>
    <scope>NUCLEOTIDE SEQUENCE [GENOMIC DNA]</scope>
</reference>
<name>CCR5_MICHU</name>
<comment type="function">
    <text evidence="1">Receptor for a number of inflammatory CC-chemokines including CCL3/MIP-1-alpha, CCL4/MIP-1-beta and RANTES and subsequently transduces a signal by increasing the intracellular calcium ion level. May play a role in the control of granulocytic lineage proliferation or differentiation. Participates in T-lymphocyte migration to the infection site by acting as a chemotactic receptor.</text>
</comment>
<comment type="subunit">
    <text evidence="1">Interacts with PRAF2. Efficient ligand binding to CCL3/MIP-1alpha and CCL4/MIP-1beta requires sulfation, O-glycosylation and sialic acid modifications. Glycosylation on Ser-6 is required for efficient binding of CCL4. Interacts with GRK2. Interacts with ARRB1 and ARRB2. Interacts with CNIH4. Interacts with S100A4; this interaction stimulates T-lymphocyte chemotaxis.</text>
</comment>
<comment type="subcellular location">
    <subcellularLocation>
        <location evidence="2">Cell membrane</location>
        <topology evidence="2">Multi-pass membrane protein</topology>
    </subcellularLocation>
</comment>
<comment type="PTM">
    <text evidence="1">Sulfated on at least 2 of the N-terminal tyrosines. Sulfation is required for efficient binding of the chemokines, CCL3 and CCL4 (By similarity).</text>
</comment>
<comment type="PTM">
    <text evidence="1">Palmitoylation in the C-terminal is important for cell surface expression.</text>
</comment>
<comment type="PTM">
    <text evidence="1">Phosphorylation on serine residues in the C-terminal is stimulated by binding CC chemokines especially by APO-RANTES.</text>
</comment>
<comment type="PTM">
    <text evidence="1">O-glycosylated, but not N-glycosylated. Ser-6 appears to be the major site even if Ser-7 may be also O-glycosylated. Also sialylated glycans present which contribute to chemokine binding. Ser-17 may also be glycosylated and, if so, with small moieties such as a T-antigen.</text>
</comment>
<comment type="similarity">
    <text evidence="4">Belongs to the G-protein coupled receptor 1 family.</text>
</comment>
<gene>
    <name type="primary">CCR5</name>
    <name type="synonym">CMKBR5</name>
</gene>
<proteinExistence type="inferred from homology"/>
<evidence type="ECO:0000250" key="1">
    <source>
        <dbReference type="UniProtKB" id="P51681"/>
    </source>
</evidence>
<evidence type="ECO:0000250" key="2">
    <source>
        <dbReference type="UniProtKB" id="Q9XT76"/>
    </source>
</evidence>
<evidence type="ECO:0000255" key="3"/>
<evidence type="ECO:0000255" key="4">
    <source>
        <dbReference type="PROSITE-ProRule" id="PRU00521"/>
    </source>
</evidence>
<protein>
    <recommendedName>
        <fullName>C-C chemokine receptor type 5</fullName>
        <shortName>C-C CKR-5</shortName>
        <shortName>CC-CKR-5</shortName>
        <shortName>CCR-5</shortName>
        <shortName>CCR5</shortName>
    </recommendedName>
    <cdAntigenName>CD195</cdAntigenName>
</protein>
<keyword id="KW-1003">Cell membrane</keyword>
<keyword id="KW-1015">Disulfide bond</keyword>
<keyword id="KW-0297">G-protein coupled receptor</keyword>
<keyword id="KW-0325">Glycoprotein</keyword>
<keyword id="KW-0449">Lipoprotein</keyword>
<keyword id="KW-0472">Membrane</keyword>
<keyword id="KW-0564">Palmitate</keyword>
<keyword id="KW-0597">Phosphoprotein</keyword>
<keyword id="KW-0675">Receptor</keyword>
<keyword id="KW-0765">Sulfation</keyword>
<keyword id="KW-0807">Transducer</keyword>
<keyword id="KW-0812">Transmembrane</keyword>
<keyword id="KW-1133">Transmembrane helix</keyword>
<dbReference type="EMBL" id="AY278744">
    <property type="protein sequence ID" value="AAQ20012.1"/>
    <property type="molecule type" value="Genomic_DNA"/>
</dbReference>
<dbReference type="EMBL" id="AY278745">
    <property type="protein sequence ID" value="AAQ20013.1"/>
    <property type="molecule type" value="Genomic_DNA"/>
</dbReference>
<dbReference type="SMR" id="Q6WN98"/>
<dbReference type="GlyCosmos" id="Q6WN98">
    <property type="glycosylation" value="2 sites, No reported glycans"/>
</dbReference>
<dbReference type="GO" id="GO:0005737">
    <property type="term" value="C:cytoplasm"/>
    <property type="evidence" value="ECO:0007669"/>
    <property type="project" value="TreeGrafter"/>
</dbReference>
<dbReference type="GO" id="GO:0009897">
    <property type="term" value="C:external side of plasma membrane"/>
    <property type="evidence" value="ECO:0000250"/>
    <property type="project" value="UniProtKB"/>
</dbReference>
<dbReference type="GO" id="GO:0016493">
    <property type="term" value="F:C-C chemokine receptor activity"/>
    <property type="evidence" value="ECO:0000250"/>
    <property type="project" value="UniProtKB"/>
</dbReference>
<dbReference type="GO" id="GO:0071791">
    <property type="term" value="F:chemokine (C-C motif) ligand 5 binding"/>
    <property type="evidence" value="ECO:0007669"/>
    <property type="project" value="TreeGrafter"/>
</dbReference>
<dbReference type="GO" id="GO:0019722">
    <property type="term" value="P:calcium-mediated signaling"/>
    <property type="evidence" value="ECO:0007669"/>
    <property type="project" value="TreeGrafter"/>
</dbReference>
<dbReference type="GO" id="GO:0060326">
    <property type="term" value="P:cell chemotaxis"/>
    <property type="evidence" value="ECO:0007669"/>
    <property type="project" value="TreeGrafter"/>
</dbReference>
<dbReference type="GO" id="GO:0006955">
    <property type="term" value="P:immune response"/>
    <property type="evidence" value="ECO:0007669"/>
    <property type="project" value="InterPro"/>
</dbReference>
<dbReference type="GO" id="GO:0006954">
    <property type="term" value="P:inflammatory response"/>
    <property type="evidence" value="ECO:0007669"/>
    <property type="project" value="InterPro"/>
</dbReference>
<dbReference type="GO" id="GO:0007204">
    <property type="term" value="P:positive regulation of cytosolic calcium ion concentration"/>
    <property type="evidence" value="ECO:0007669"/>
    <property type="project" value="TreeGrafter"/>
</dbReference>
<dbReference type="CDD" id="cd15184">
    <property type="entry name" value="7tmA_CCR5_CCR2"/>
    <property type="match status" value="1"/>
</dbReference>
<dbReference type="FunFam" id="1.20.1070.10:FF:000026">
    <property type="entry name" value="C-C chemokine receptor type 5"/>
    <property type="match status" value="1"/>
</dbReference>
<dbReference type="Gene3D" id="1.20.1070.10">
    <property type="entry name" value="Rhodopsin 7-helix transmembrane proteins"/>
    <property type="match status" value="1"/>
</dbReference>
<dbReference type="InterPro" id="IPR050119">
    <property type="entry name" value="CCR1-9-like"/>
</dbReference>
<dbReference type="InterPro" id="IPR002240">
    <property type="entry name" value="Chemokine_CCR5"/>
</dbReference>
<dbReference type="InterPro" id="IPR000355">
    <property type="entry name" value="Chemokine_rcpt"/>
</dbReference>
<dbReference type="InterPro" id="IPR000276">
    <property type="entry name" value="GPCR_Rhodpsn"/>
</dbReference>
<dbReference type="InterPro" id="IPR017452">
    <property type="entry name" value="GPCR_Rhodpsn_7TM"/>
</dbReference>
<dbReference type="PANTHER" id="PTHR10489:SF686">
    <property type="entry name" value="C-C CHEMOKINE RECEPTOR TYPE 5"/>
    <property type="match status" value="1"/>
</dbReference>
<dbReference type="PANTHER" id="PTHR10489">
    <property type="entry name" value="CELL ADHESION MOLECULE"/>
    <property type="match status" value="1"/>
</dbReference>
<dbReference type="Pfam" id="PF00001">
    <property type="entry name" value="7tm_1"/>
    <property type="match status" value="1"/>
</dbReference>
<dbReference type="PRINTS" id="PR00657">
    <property type="entry name" value="CCCHEMOKINER"/>
</dbReference>
<dbReference type="PRINTS" id="PR01110">
    <property type="entry name" value="CHEMOKINER5"/>
</dbReference>
<dbReference type="PRINTS" id="PR00237">
    <property type="entry name" value="GPCRRHODOPSN"/>
</dbReference>
<dbReference type="SUPFAM" id="SSF81321">
    <property type="entry name" value="Family A G protein-coupled receptor-like"/>
    <property type="match status" value="1"/>
</dbReference>
<dbReference type="PROSITE" id="PS00237">
    <property type="entry name" value="G_PROTEIN_RECEP_F1_1"/>
    <property type="match status" value="1"/>
</dbReference>
<dbReference type="PROSITE" id="PS50262">
    <property type="entry name" value="G_PROTEIN_RECEP_F1_2"/>
    <property type="match status" value="1"/>
</dbReference>
<feature type="chain" id="PRO_0000253615" description="C-C chemokine receptor type 5">
    <location>
        <begin position="1"/>
        <end position="352"/>
    </location>
</feature>
<feature type="topological domain" description="Extracellular" evidence="3">
    <location>
        <begin position="1"/>
        <end position="30"/>
    </location>
</feature>
<feature type="transmembrane region" description="Helical; Name=1" evidence="3">
    <location>
        <begin position="31"/>
        <end position="58"/>
    </location>
</feature>
<feature type="topological domain" description="Cytoplasmic" evidence="3">
    <location>
        <begin position="59"/>
        <end position="68"/>
    </location>
</feature>
<feature type="transmembrane region" description="Helical; Name=2" evidence="3">
    <location>
        <begin position="69"/>
        <end position="89"/>
    </location>
</feature>
<feature type="topological domain" description="Extracellular" evidence="3">
    <location>
        <begin position="90"/>
        <end position="102"/>
    </location>
</feature>
<feature type="transmembrane region" description="Helical; Name=3" evidence="3">
    <location>
        <begin position="103"/>
        <end position="124"/>
    </location>
</feature>
<feature type="topological domain" description="Cytoplasmic" evidence="3">
    <location>
        <begin position="125"/>
        <end position="141"/>
    </location>
</feature>
<feature type="transmembrane region" description="Helical; Name=4" evidence="3">
    <location>
        <begin position="142"/>
        <end position="166"/>
    </location>
</feature>
<feature type="topological domain" description="Extracellular" evidence="3">
    <location>
        <begin position="167"/>
        <end position="198"/>
    </location>
</feature>
<feature type="transmembrane region" description="Helical; Name=5" evidence="3">
    <location>
        <begin position="199"/>
        <end position="218"/>
    </location>
</feature>
<feature type="topological domain" description="Cytoplasmic" evidence="3">
    <location>
        <begin position="219"/>
        <end position="235"/>
    </location>
</feature>
<feature type="transmembrane region" description="Helical; Name=6" evidence="3">
    <location>
        <begin position="236"/>
        <end position="260"/>
    </location>
</feature>
<feature type="topological domain" description="Extracellular" evidence="3">
    <location>
        <begin position="261"/>
        <end position="277"/>
    </location>
</feature>
<feature type="transmembrane region" description="Helical; Name=7" evidence="3">
    <location>
        <begin position="278"/>
        <end position="301"/>
    </location>
</feature>
<feature type="topological domain" description="Cytoplasmic" evidence="3">
    <location>
        <begin position="302"/>
        <end position="352"/>
    </location>
</feature>
<feature type="modified residue" description="Sulfotyrosine" evidence="1">
    <location>
        <position position="3"/>
    </location>
</feature>
<feature type="modified residue" description="Sulfotyrosine" evidence="3">
    <location>
        <position position="10"/>
    </location>
</feature>
<feature type="modified residue" description="Sulfotyrosine" evidence="3">
    <location>
        <position position="14"/>
    </location>
</feature>
<feature type="modified residue" description="Phosphoserine; by BARK1" evidence="1">
    <location>
        <position position="337"/>
    </location>
</feature>
<feature type="modified residue" description="Phosphoserine; by BARK1" evidence="1">
    <location>
        <position position="342"/>
    </location>
</feature>
<feature type="modified residue" description="Phosphoserine; by BARK1" evidence="1">
    <location>
        <position position="349"/>
    </location>
</feature>
<feature type="lipid moiety-binding region" description="S-palmitoyl cysteine" evidence="1">
    <location>
        <position position="321"/>
    </location>
</feature>
<feature type="lipid moiety-binding region" description="S-palmitoyl cysteine" evidence="1">
    <location>
        <position position="323"/>
    </location>
</feature>
<feature type="lipid moiety-binding region" description="S-palmitoyl cysteine" evidence="1">
    <location>
        <position position="324"/>
    </location>
</feature>
<feature type="glycosylation site" description="O-linked (GalNAc...) serine" evidence="1">
    <location>
        <position position="6"/>
    </location>
</feature>
<feature type="glycosylation site" description="O-linked (GalNAc...) serine" evidence="1">
    <location>
        <position position="7"/>
    </location>
</feature>
<feature type="disulfide bond" evidence="1">
    <location>
        <begin position="20"/>
        <end position="269"/>
    </location>
</feature>
<feature type="disulfide bond" evidence="4">
    <location>
        <begin position="101"/>
        <end position="178"/>
    </location>
</feature>
<accession>Q6WN98</accession>
<organism>
    <name type="scientific">Mico humeralifer</name>
    <name type="common">Black and white tassel-ear marmoset</name>
    <name type="synonym">Callithrix humeralifera</name>
    <dbReference type="NCBI Taxonomy" id="52232"/>
    <lineage>
        <taxon>Eukaryota</taxon>
        <taxon>Metazoa</taxon>
        <taxon>Chordata</taxon>
        <taxon>Craniata</taxon>
        <taxon>Vertebrata</taxon>
        <taxon>Euteleostomi</taxon>
        <taxon>Mammalia</taxon>
        <taxon>Eutheria</taxon>
        <taxon>Euarchontoglires</taxon>
        <taxon>Primates</taxon>
        <taxon>Haplorrhini</taxon>
        <taxon>Platyrrhini</taxon>
        <taxon>Cebidae</taxon>
        <taxon>Callitrichinae</taxon>
        <taxon>Mico</taxon>
    </lineage>
</organism>
<sequence>MDYQVSSPIYDIDYGPSEPCRKIDVKQMGAHLLPPLYSMVFLFGFVGNMLVVLILINCKRLKSMTDIYLLNLAISDLIFLFTVPFWAHYAAGQWDFGNTMCQFLTGLYFIGFFSGIFFIILLTIDRYLAIVHAVFALKARTVTFGVVTSVITWVVAVFASLPGIIFTRSQKEGYHYTCSPHFPFSQYQFWKNFETLKMVILGLVLPLLVMVICYSGILKTLLRCRNEKKRHRAVRLIFTIMIVYFLFWAPYNIVLLLNTYQEFFGLNNCSSSNRLDQAMQVTETLGMTHCCVNPIIYAFVGEKFRNYLKVFFQKHIAKCFCECCSIFQKEAPERANSVYTRSTGEQEISVGL</sequence>